<gene>
    <name type="ordered locus">At1g72960</name>
    <name type="ORF">F3N23.16</name>
</gene>
<accession>Q9SSN0</accession>
<protein>
    <recommendedName>
        <fullName evidence="1">Protein ROOT HAIR DEFECTIVE 3 homolog 1</fullName>
        <ecNumber evidence="1">3.6.5.-</ecNumber>
    </recommendedName>
    <alternativeName>
        <fullName evidence="1">Protein SEY1 homolog 2</fullName>
    </alternativeName>
</protein>
<feature type="chain" id="PRO_0000407755" description="Protein ROOT HAIR DEFECTIVE 3 homolog 1">
    <location>
        <begin position="1"/>
        <end position="795"/>
    </location>
</feature>
<feature type="topological domain" description="Cytoplasmic" evidence="1">
    <location>
        <begin position="1"/>
        <end position="682"/>
    </location>
</feature>
<feature type="transmembrane region" description="Helical" evidence="1">
    <location>
        <begin position="683"/>
        <end position="703"/>
    </location>
</feature>
<feature type="topological domain" description="Lumenal" evidence="1">
    <location>
        <begin position="704"/>
        <end position="706"/>
    </location>
</feature>
<feature type="transmembrane region" description="Helical" evidence="1">
    <location>
        <begin position="707"/>
        <end position="727"/>
    </location>
</feature>
<feature type="topological domain" description="Cytoplasmic" evidence="1">
    <location>
        <begin position="728"/>
        <end position="795"/>
    </location>
</feature>
<feature type="domain" description="GB1/RHD3-type G" evidence="2">
    <location>
        <begin position="39"/>
        <end position="254"/>
    </location>
</feature>
<feature type="region of interest" description="Disordered" evidence="3">
    <location>
        <begin position="761"/>
        <end position="795"/>
    </location>
</feature>
<feature type="coiled-coil region" evidence="1">
    <location>
        <begin position="218"/>
        <end position="244"/>
    </location>
</feature>
<feature type="compositionally biased region" description="Low complexity" evidence="3">
    <location>
        <begin position="775"/>
        <end position="784"/>
    </location>
</feature>
<feature type="compositionally biased region" description="Basic and acidic residues" evidence="3">
    <location>
        <begin position="785"/>
        <end position="795"/>
    </location>
</feature>
<feature type="binding site" evidence="1">
    <location>
        <begin position="49"/>
        <end position="56"/>
    </location>
    <ligand>
        <name>GTP</name>
        <dbReference type="ChEBI" id="CHEBI:37565"/>
    </ligand>
</feature>
<comment type="function">
    <text evidence="1">Probable GTP-binding protein that may be involved in cell development.</text>
</comment>
<comment type="subcellular location">
    <subcellularLocation>
        <location evidence="1">Endoplasmic reticulum membrane</location>
        <topology evidence="1">Multi-pass membrane protein</topology>
    </subcellularLocation>
</comment>
<comment type="tissue specificity">
    <text evidence="4">Specifically expressed in flowers.</text>
</comment>
<comment type="similarity">
    <text evidence="2">Belongs to the TRAFAC class dynamin-like GTPase superfamily. GB1/RHD3 GTPase family. RHD3 subfamily.</text>
</comment>
<keyword id="KW-0175">Coiled coil</keyword>
<keyword id="KW-0256">Endoplasmic reticulum</keyword>
<keyword id="KW-0342">GTP-binding</keyword>
<keyword id="KW-0378">Hydrolase</keyword>
<keyword id="KW-0472">Membrane</keyword>
<keyword id="KW-0547">Nucleotide-binding</keyword>
<keyword id="KW-1185">Reference proteome</keyword>
<keyword id="KW-0812">Transmembrane</keyword>
<keyword id="KW-1133">Transmembrane helix</keyword>
<name>RHD31_ARATH</name>
<proteinExistence type="evidence at transcript level"/>
<reference key="1">
    <citation type="journal article" date="2000" name="Nature">
        <title>Sequence and analysis of chromosome 1 of the plant Arabidopsis thaliana.</title>
        <authorList>
            <person name="Theologis A."/>
            <person name="Ecker J.R."/>
            <person name="Palm C.J."/>
            <person name="Federspiel N.A."/>
            <person name="Kaul S."/>
            <person name="White O."/>
            <person name="Alonso J."/>
            <person name="Altafi H."/>
            <person name="Araujo R."/>
            <person name="Bowman C.L."/>
            <person name="Brooks S.Y."/>
            <person name="Buehler E."/>
            <person name="Chan A."/>
            <person name="Chao Q."/>
            <person name="Chen H."/>
            <person name="Cheuk R.F."/>
            <person name="Chin C.W."/>
            <person name="Chung M.K."/>
            <person name="Conn L."/>
            <person name="Conway A.B."/>
            <person name="Conway A.R."/>
            <person name="Creasy T.H."/>
            <person name="Dewar K."/>
            <person name="Dunn P."/>
            <person name="Etgu P."/>
            <person name="Feldblyum T.V."/>
            <person name="Feng J.-D."/>
            <person name="Fong B."/>
            <person name="Fujii C.Y."/>
            <person name="Gill J.E."/>
            <person name="Goldsmith A.D."/>
            <person name="Haas B."/>
            <person name="Hansen N.F."/>
            <person name="Hughes B."/>
            <person name="Huizar L."/>
            <person name="Hunter J.L."/>
            <person name="Jenkins J."/>
            <person name="Johnson-Hopson C."/>
            <person name="Khan S."/>
            <person name="Khaykin E."/>
            <person name="Kim C.J."/>
            <person name="Koo H.L."/>
            <person name="Kremenetskaia I."/>
            <person name="Kurtz D.B."/>
            <person name="Kwan A."/>
            <person name="Lam B."/>
            <person name="Langin-Hooper S."/>
            <person name="Lee A."/>
            <person name="Lee J.M."/>
            <person name="Lenz C.A."/>
            <person name="Li J.H."/>
            <person name="Li Y.-P."/>
            <person name="Lin X."/>
            <person name="Liu S.X."/>
            <person name="Liu Z.A."/>
            <person name="Luros J.S."/>
            <person name="Maiti R."/>
            <person name="Marziali A."/>
            <person name="Militscher J."/>
            <person name="Miranda M."/>
            <person name="Nguyen M."/>
            <person name="Nierman W.C."/>
            <person name="Osborne B.I."/>
            <person name="Pai G."/>
            <person name="Peterson J."/>
            <person name="Pham P.K."/>
            <person name="Rizzo M."/>
            <person name="Rooney T."/>
            <person name="Rowley D."/>
            <person name="Sakano H."/>
            <person name="Salzberg S.L."/>
            <person name="Schwartz J.R."/>
            <person name="Shinn P."/>
            <person name="Southwick A.M."/>
            <person name="Sun H."/>
            <person name="Tallon L.J."/>
            <person name="Tambunga G."/>
            <person name="Toriumi M.J."/>
            <person name="Town C.D."/>
            <person name="Utterback T."/>
            <person name="Van Aken S."/>
            <person name="Vaysberg M."/>
            <person name="Vysotskaia V.S."/>
            <person name="Walker M."/>
            <person name="Wu D."/>
            <person name="Yu G."/>
            <person name="Fraser C.M."/>
            <person name="Venter J.C."/>
            <person name="Davis R.W."/>
        </authorList>
    </citation>
    <scope>NUCLEOTIDE SEQUENCE [LARGE SCALE GENOMIC DNA]</scope>
    <source>
        <strain>cv. Columbia</strain>
    </source>
</reference>
<reference key="2">
    <citation type="journal article" date="2017" name="Plant J.">
        <title>Araport11: a complete reannotation of the Arabidopsis thaliana reference genome.</title>
        <authorList>
            <person name="Cheng C.Y."/>
            <person name="Krishnakumar V."/>
            <person name="Chan A.P."/>
            <person name="Thibaud-Nissen F."/>
            <person name="Schobel S."/>
            <person name="Town C.D."/>
        </authorList>
    </citation>
    <scope>GENOME REANNOTATION</scope>
    <source>
        <strain>cv. Columbia</strain>
    </source>
</reference>
<reference key="3">
    <citation type="journal article" date="2003" name="Planta">
        <title>The Arabidopsis RHD3 gene is required for cell wall biosynthesis and actin organization.</title>
        <authorList>
            <person name="Hu Y."/>
            <person name="Zhong R."/>
            <person name="Morrison W.H. III"/>
            <person name="Ye Z.H."/>
        </authorList>
    </citation>
    <scope>TISSUE SPECIFICITY</scope>
</reference>
<organism>
    <name type="scientific">Arabidopsis thaliana</name>
    <name type="common">Mouse-ear cress</name>
    <dbReference type="NCBI Taxonomy" id="3702"/>
    <lineage>
        <taxon>Eukaryota</taxon>
        <taxon>Viridiplantae</taxon>
        <taxon>Streptophyta</taxon>
        <taxon>Embryophyta</taxon>
        <taxon>Tracheophyta</taxon>
        <taxon>Spermatophyta</taxon>
        <taxon>Magnoliopsida</taxon>
        <taxon>eudicotyledons</taxon>
        <taxon>Gunneridae</taxon>
        <taxon>Pentapetalae</taxon>
        <taxon>rosids</taxon>
        <taxon>malvids</taxon>
        <taxon>Brassicales</taxon>
        <taxon>Brassicaceae</taxon>
        <taxon>Camelineae</taxon>
        <taxon>Arabidopsis</taxon>
    </lineage>
</organism>
<sequence length="795" mass="88819">MDADKSEGCCSVQLIDGDGIYNVSRIDHFIKDVKLADCGLSYAVVSIMGPQSSGKSTLLNHLFGTNFMEMDAFKGRSQTTKGIWLARCAGIEPCTLVMDLEGTDGRERGEDDTAFEKQSALFALAISDIVLINMWCHDIGREQAANKPLLKTVFQVMMRLFSPRKTTMLFVIRDKTRTPLENLEPVLREDIQKIWDSVPKPEAHKETPLSDFFNVEVVALSSYEEKEEQFKEQIASLRQRFMHSIAPGGLAGDRRGVIPASGFAFSADQIWRVIKENKDLDLPAHKVMVATVRCEEIANEKFAHFITNEDWRKLDEEVQAGPVSNFGKRLTTILGSCLSEYDGEATFFDEGVRSSKRQQLEEKLLQLVNPAFQDVLGHIRWGILEKFKASFDKALGIGEGFSSASQDWFKACMTQFDEECAGAIIEQANWDTSKVRDKLVRDIEAHISSVRTSKLSELTSLYESKVHEALSEPVEALLDGANDETWSTVKKLHRRETESAVSGLSSALAGFDMEEETRDRMVKSLQDYARGVIETKAKEEAVRVLMRMKERFGTIFSHDSDSMPRVWTGKEDLRAITKSARSASLKLLSVMAVIRLGDEPDNIEKTLTVALLDPTKNDTSKKSITTSDPLASSTWDEVPSSRTLITPVQCKSIWRQFKTETEYTVTQAISAQEANRRGNNWLPPPWAILALIVLGFNEFMTLLRNPLYLGVMFVAFLLAKALWTQLDIPGEFRNGALPGLISISAKFVPTVMNLIKNLAAQGEDPPAANPENRRSSNNTSSSENPPDHKSSSKED</sequence>
<evidence type="ECO:0000255" key="1">
    <source>
        <dbReference type="HAMAP-Rule" id="MF_03109"/>
    </source>
</evidence>
<evidence type="ECO:0000255" key="2">
    <source>
        <dbReference type="PROSITE-ProRule" id="PRU01052"/>
    </source>
</evidence>
<evidence type="ECO:0000256" key="3">
    <source>
        <dbReference type="SAM" id="MobiDB-lite"/>
    </source>
</evidence>
<evidence type="ECO:0000269" key="4">
    <source>
    </source>
</evidence>
<dbReference type="EC" id="3.6.5.-" evidence="1"/>
<dbReference type="EMBL" id="AC008017">
    <property type="protein sequence ID" value="AAD55643.1"/>
    <property type="molecule type" value="Genomic_DNA"/>
</dbReference>
<dbReference type="EMBL" id="CP002684">
    <property type="protein sequence ID" value="AEE35396.1"/>
    <property type="molecule type" value="Genomic_DNA"/>
</dbReference>
<dbReference type="PIR" id="H96754">
    <property type="entry name" value="H96754"/>
</dbReference>
<dbReference type="RefSeq" id="NP_177439.2">
    <property type="nucleotide sequence ID" value="NM_105954.3"/>
</dbReference>
<dbReference type="SMR" id="Q9SSN0"/>
<dbReference type="FunCoup" id="Q9SSN0">
    <property type="interactions" value="148"/>
</dbReference>
<dbReference type="STRING" id="3702.Q9SSN0"/>
<dbReference type="iPTMnet" id="Q9SSN0"/>
<dbReference type="PaxDb" id="3702-AT1G72960.1"/>
<dbReference type="ProteomicsDB" id="236915"/>
<dbReference type="EnsemblPlants" id="AT1G72960.1">
    <property type="protein sequence ID" value="AT1G72960.1"/>
    <property type="gene ID" value="AT1G72960"/>
</dbReference>
<dbReference type="GeneID" id="843627"/>
<dbReference type="Gramene" id="AT1G72960.1">
    <property type="protein sequence ID" value="AT1G72960.1"/>
    <property type="gene ID" value="AT1G72960"/>
</dbReference>
<dbReference type="KEGG" id="ath:AT1G72960"/>
<dbReference type="Araport" id="AT1G72960"/>
<dbReference type="TAIR" id="AT1G72960"/>
<dbReference type="eggNOG" id="KOG2203">
    <property type="taxonomic scope" value="Eukaryota"/>
</dbReference>
<dbReference type="HOGENOM" id="CLU_011270_1_0_1"/>
<dbReference type="InParanoid" id="Q9SSN0"/>
<dbReference type="OMA" id="PTLICND"/>
<dbReference type="PRO" id="PR:Q9SSN0"/>
<dbReference type="Proteomes" id="UP000006548">
    <property type="component" value="Chromosome 1"/>
</dbReference>
<dbReference type="ExpressionAtlas" id="Q9SSN0">
    <property type="expression patterns" value="baseline and differential"/>
</dbReference>
<dbReference type="GO" id="GO:0005789">
    <property type="term" value="C:endoplasmic reticulum membrane"/>
    <property type="evidence" value="ECO:0007669"/>
    <property type="project" value="UniProtKB-SubCell"/>
</dbReference>
<dbReference type="GO" id="GO:0005525">
    <property type="term" value="F:GTP binding"/>
    <property type="evidence" value="ECO:0007669"/>
    <property type="project" value="UniProtKB-UniRule"/>
</dbReference>
<dbReference type="GO" id="GO:0003924">
    <property type="term" value="F:GTPase activity"/>
    <property type="evidence" value="ECO:0007669"/>
    <property type="project" value="UniProtKB-UniRule"/>
</dbReference>
<dbReference type="CDD" id="cd01851">
    <property type="entry name" value="GBP"/>
    <property type="match status" value="1"/>
</dbReference>
<dbReference type="FunFam" id="3.40.50.300:FF:002271">
    <property type="entry name" value="Protein ROOT HAIR DEFECTIVE 3 homolog"/>
    <property type="match status" value="1"/>
</dbReference>
<dbReference type="Gene3D" id="3.40.50.300">
    <property type="entry name" value="P-loop containing nucleotide triphosphate hydrolases"/>
    <property type="match status" value="1"/>
</dbReference>
<dbReference type="HAMAP" id="MF_03109">
    <property type="entry name" value="Sey1"/>
    <property type="match status" value="1"/>
</dbReference>
<dbReference type="InterPro" id="IPR030386">
    <property type="entry name" value="G_GB1_RHD3_dom"/>
</dbReference>
<dbReference type="InterPro" id="IPR027417">
    <property type="entry name" value="P-loop_NTPase"/>
</dbReference>
<dbReference type="InterPro" id="IPR008803">
    <property type="entry name" value="RHD3/Sey1"/>
</dbReference>
<dbReference type="InterPro" id="IPR046758">
    <property type="entry name" value="Sey1/RHD3-like_3HB"/>
</dbReference>
<dbReference type="PANTHER" id="PTHR45923:SF5">
    <property type="entry name" value="PROTEIN ROOT HAIR DEFECTIVE 3 HOMOLOG 1"/>
    <property type="match status" value="1"/>
</dbReference>
<dbReference type="PANTHER" id="PTHR45923">
    <property type="entry name" value="PROTEIN SEY1"/>
    <property type="match status" value="1"/>
</dbReference>
<dbReference type="Pfam" id="PF05879">
    <property type="entry name" value="RHD3_GTPase"/>
    <property type="match status" value="1"/>
</dbReference>
<dbReference type="Pfam" id="PF20428">
    <property type="entry name" value="Sey1_3HB"/>
    <property type="match status" value="1"/>
</dbReference>
<dbReference type="SUPFAM" id="SSF52540">
    <property type="entry name" value="P-loop containing nucleoside triphosphate hydrolases"/>
    <property type="match status" value="1"/>
</dbReference>
<dbReference type="PROSITE" id="PS51715">
    <property type="entry name" value="G_GB1_RHD3"/>
    <property type="match status" value="1"/>
</dbReference>